<evidence type="ECO:0000255" key="1">
    <source>
        <dbReference type="HAMAP-Rule" id="MF_00075"/>
    </source>
</evidence>
<protein>
    <recommendedName>
        <fullName evidence="1">Translation initiation factor IF-1</fullName>
    </recommendedName>
</protein>
<name>IF1_STAES</name>
<comment type="function">
    <text evidence="1">One of the essential components for the initiation of protein synthesis. Stabilizes the binding of IF-2 and IF-3 on the 30S subunit to which N-formylmethionyl-tRNA(fMet) subsequently binds. Helps modulate mRNA selection, yielding the 30S pre-initiation complex (PIC). Upon addition of the 50S ribosomal subunit IF-1, IF-2 and IF-3 are released leaving the mature 70S translation initiation complex.</text>
</comment>
<comment type="subunit">
    <text evidence="1">Component of the 30S ribosomal translation pre-initiation complex which assembles on the 30S ribosome in the order IF-2 and IF-3, IF-1 and N-formylmethionyl-tRNA(fMet); mRNA recruitment can occur at any time during PIC assembly.</text>
</comment>
<comment type="subcellular location">
    <subcellularLocation>
        <location evidence="1">Cytoplasm</location>
    </subcellularLocation>
</comment>
<comment type="similarity">
    <text evidence="1">Belongs to the IF-1 family.</text>
</comment>
<proteinExistence type="inferred from homology"/>
<gene>
    <name evidence="1" type="primary">infA</name>
    <name type="ordered locus">SE_1801</name>
</gene>
<sequence length="72" mass="8266">MAKQDVIELEGTVLDTLPNAMFKVELENGHEILAHVSGKIRMNYIRILPGDKVTVEMSPYDLSRGRITYRYK</sequence>
<dbReference type="EMBL" id="AE015929">
    <property type="protein sequence ID" value="AAO05442.1"/>
    <property type="molecule type" value="Genomic_DNA"/>
</dbReference>
<dbReference type="RefSeq" id="NP_765356.1">
    <property type="nucleotide sequence ID" value="NC_004461.1"/>
</dbReference>
<dbReference type="RefSeq" id="WP_001829792.1">
    <property type="nucleotide sequence ID" value="NZ_WBME01000007.1"/>
</dbReference>
<dbReference type="SMR" id="Q8CRI1"/>
<dbReference type="GeneID" id="93780213"/>
<dbReference type="KEGG" id="sep:SE_1801"/>
<dbReference type="PATRIC" id="fig|176280.10.peg.1758"/>
<dbReference type="eggNOG" id="COG0361">
    <property type="taxonomic scope" value="Bacteria"/>
</dbReference>
<dbReference type="HOGENOM" id="CLU_151267_1_0_9"/>
<dbReference type="OrthoDB" id="9803250at2"/>
<dbReference type="PRO" id="PR:Q8CRI1"/>
<dbReference type="Proteomes" id="UP000001411">
    <property type="component" value="Chromosome"/>
</dbReference>
<dbReference type="GO" id="GO:0005829">
    <property type="term" value="C:cytosol"/>
    <property type="evidence" value="ECO:0007669"/>
    <property type="project" value="TreeGrafter"/>
</dbReference>
<dbReference type="GO" id="GO:0043022">
    <property type="term" value="F:ribosome binding"/>
    <property type="evidence" value="ECO:0007669"/>
    <property type="project" value="UniProtKB-UniRule"/>
</dbReference>
<dbReference type="GO" id="GO:0019843">
    <property type="term" value="F:rRNA binding"/>
    <property type="evidence" value="ECO:0007669"/>
    <property type="project" value="UniProtKB-UniRule"/>
</dbReference>
<dbReference type="GO" id="GO:0003743">
    <property type="term" value="F:translation initiation factor activity"/>
    <property type="evidence" value="ECO:0007669"/>
    <property type="project" value="UniProtKB-UniRule"/>
</dbReference>
<dbReference type="CDD" id="cd04451">
    <property type="entry name" value="S1_IF1"/>
    <property type="match status" value="1"/>
</dbReference>
<dbReference type="FunFam" id="2.40.50.140:FF:000002">
    <property type="entry name" value="Translation initiation factor IF-1"/>
    <property type="match status" value="1"/>
</dbReference>
<dbReference type="Gene3D" id="2.40.50.140">
    <property type="entry name" value="Nucleic acid-binding proteins"/>
    <property type="match status" value="1"/>
</dbReference>
<dbReference type="HAMAP" id="MF_00075">
    <property type="entry name" value="IF_1"/>
    <property type="match status" value="1"/>
</dbReference>
<dbReference type="InterPro" id="IPR012340">
    <property type="entry name" value="NA-bd_OB-fold"/>
</dbReference>
<dbReference type="InterPro" id="IPR006196">
    <property type="entry name" value="RNA-binding_domain_S1_IF1"/>
</dbReference>
<dbReference type="InterPro" id="IPR003029">
    <property type="entry name" value="S1_domain"/>
</dbReference>
<dbReference type="InterPro" id="IPR004368">
    <property type="entry name" value="TIF_IF1"/>
</dbReference>
<dbReference type="NCBIfam" id="TIGR00008">
    <property type="entry name" value="infA"/>
    <property type="match status" value="1"/>
</dbReference>
<dbReference type="PANTHER" id="PTHR33370">
    <property type="entry name" value="TRANSLATION INITIATION FACTOR IF-1, CHLOROPLASTIC"/>
    <property type="match status" value="1"/>
</dbReference>
<dbReference type="PANTHER" id="PTHR33370:SF1">
    <property type="entry name" value="TRANSLATION INITIATION FACTOR IF-1, CHLOROPLASTIC"/>
    <property type="match status" value="1"/>
</dbReference>
<dbReference type="Pfam" id="PF01176">
    <property type="entry name" value="eIF-1a"/>
    <property type="match status" value="1"/>
</dbReference>
<dbReference type="SMART" id="SM00316">
    <property type="entry name" value="S1"/>
    <property type="match status" value="1"/>
</dbReference>
<dbReference type="SUPFAM" id="SSF50249">
    <property type="entry name" value="Nucleic acid-binding proteins"/>
    <property type="match status" value="1"/>
</dbReference>
<dbReference type="PROSITE" id="PS50832">
    <property type="entry name" value="S1_IF1_TYPE"/>
    <property type="match status" value="1"/>
</dbReference>
<reference key="1">
    <citation type="journal article" date="2003" name="Mol. Microbiol.">
        <title>Genome-based analysis of virulence genes in a non-biofilm-forming Staphylococcus epidermidis strain (ATCC 12228).</title>
        <authorList>
            <person name="Zhang Y.-Q."/>
            <person name="Ren S.-X."/>
            <person name="Li H.-L."/>
            <person name="Wang Y.-X."/>
            <person name="Fu G."/>
            <person name="Yang J."/>
            <person name="Qin Z.-Q."/>
            <person name="Miao Y.-G."/>
            <person name="Wang W.-Y."/>
            <person name="Chen R.-S."/>
            <person name="Shen Y."/>
            <person name="Chen Z."/>
            <person name="Yuan Z.-H."/>
            <person name="Zhao G.-P."/>
            <person name="Qu D."/>
            <person name="Danchin A."/>
            <person name="Wen Y.-M."/>
        </authorList>
    </citation>
    <scope>NUCLEOTIDE SEQUENCE [LARGE SCALE GENOMIC DNA]</scope>
    <source>
        <strain>ATCC 12228 / FDA PCI 1200</strain>
    </source>
</reference>
<organism>
    <name type="scientific">Staphylococcus epidermidis (strain ATCC 12228 / FDA PCI 1200)</name>
    <dbReference type="NCBI Taxonomy" id="176280"/>
    <lineage>
        <taxon>Bacteria</taxon>
        <taxon>Bacillati</taxon>
        <taxon>Bacillota</taxon>
        <taxon>Bacilli</taxon>
        <taxon>Bacillales</taxon>
        <taxon>Staphylococcaceae</taxon>
        <taxon>Staphylococcus</taxon>
    </lineage>
</organism>
<feature type="chain" id="PRO_0000095871" description="Translation initiation factor IF-1">
    <location>
        <begin position="1"/>
        <end position="72"/>
    </location>
</feature>
<feature type="domain" description="S1-like" evidence="1">
    <location>
        <begin position="1"/>
        <end position="72"/>
    </location>
</feature>
<keyword id="KW-0963">Cytoplasm</keyword>
<keyword id="KW-0396">Initiation factor</keyword>
<keyword id="KW-0648">Protein biosynthesis</keyword>
<keyword id="KW-0694">RNA-binding</keyword>
<keyword id="KW-0699">rRNA-binding</keyword>
<accession>Q8CRI1</accession>